<protein>
    <recommendedName>
        <fullName evidence="9">Nitrosourea synthase</fullName>
        <ecNumber evidence="1 2">1.14.13.250</ecNumber>
    </recommendedName>
    <alternativeName>
        <fullName evidence="8">Multi-domain metalloenzyme SznF</fullName>
    </alternativeName>
</protein>
<accession>A0A411MR89</accession>
<organism>
    <name type="scientific">Streptomyces achromogenes subsp. streptozoticus</name>
    <dbReference type="NCBI Taxonomy" id="285532"/>
    <lineage>
        <taxon>Bacteria</taxon>
        <taxon>Bacillati</taxon>
        <taxon>Actinomycetota</taxon>
        <taxon>Actinomycetes</taxon>
        <taxon>Kitasatosporales</taxon>
        <taxon>Streptomycetaceae</taxon>
        <taxon>Streptomyces</taxon>
    </lineage>
</organism>
<gene>
    <name evidence="6" type="primary">sznF</name>
    <name evidence="7" type="synonym">stzF</name>
</gene>
<keyword id="KW-0002">3D-structure</keyword>
<keyword id="KW-0045">Antibiotic biosynthesis</keyword>
<keyword id="KW-0408">Iron</keyword>
<keyword id="KW-0479">Metal-binding</keyword>
<keyword id="KW-0503">Monooxygenase</keyword>
<keyword id="KW-0560">Oxidoreductase</keyword>
<name>SZNF_STRC2</name>
<proteinExistence type="evidence at protein level"/>
<sequence length="471" mass="53802">MSHVPPHVPFELSGAELRDAIVQYATNPIYHDNLDWLNHDNPYRRQLRPQVLPHLDYDKVPGRENILNYASLAVQRLLTSVYEADLVFFPKSGLKGKEEDFRAFYSPANRALGERIRPALERYAFGFLDDEVETSGTWTAQSLDAYLDSLDTAGGAEQSPVEKAILGSADRERAARMWLVQFAPDFLSEASPMMRNVLGYYGPAQSEWFKVVIDEYGYGVHDTKHSTLFERTLESVGLESDLHRYWQYYLNSSLLLNNYFHYLGKNHELFFRYVGALYYTESSLVDFCRRADHLLREVFGDTVDTTYFTEHIHIDQHHGRMAREKIIKPLVEAHGDGIIPEIVRGIEEYRVLLEIGDFDFSEQIAWMDAQPELKKLHDPVFEGLKQGKVDAPVAHLVEPRGELSNTHCHDGDELCHIVSGTMRFESGLGSSLTLQAGEGVVIKRNRLHGANIESDECVYEIHSVGDYRKCL</sequence>
<reference key="1">
    <citation type="journal article" date="2019" name="Nature">
        <title>An N-nitrosating metalloenzyme constructs the pharmacophore of streptozotocin.</title>
        <authorList>
            <person name="Ng T.L."/>
            <person name="Rohac R."/>
            <person name="Mitchell A.J."/>
            <person name="Boal A.K."/>
            <person name="Balskus E.P."/>
        </authorList>
    </citation>
    <scope>NUCLEOTIDE SEQUENCE [GENOMIC DNA]</scope>
    <scope>FUNCTION</scope>
    <scope>CATALYTIC ACTIVITY</scope>
    <scope>COFACTOR</scope>
    <scope>PATHWAY</scope>
    <scope>SUBUNIT</scope>
    <scope>DOMAIN</scope>
    <scope>DISRUPTION PHENOTYPE</scope>
    <scope>MUTAGENESIS OF GLU-215; HIS-225; GLU-281; HIS-311; ASP-315; HIS-318; HIS-407; HIS-409 AND HIS-448</scope>
    <source>
        <strain>NRRL 2697</strain>
    </source>
</reference>
<reference key="2">
    <citation type="journal article" date="2019" name="J. Am. Chem. Soc.">
        <title>Two-enzyme pathway links L-arginine to nitric oxide in N-nitroso biosynthesis.</title>
        <authorList>
            <person name="He H.Y."/>
            <person name="Henderson A.C."/>
            <person name="Du Y.L."/>
            <person name="Ryan K.S."/>
        </authorList>
    </citation>
    <scope>NUCLEOTIDE SEQUENCE [GENOMIC DNA]</scope>
    <scope>FUNCTION</scope>
    <scope>CATALYTIC ACTIVITY</scope>
    <scope>COFACTOR</scope>
    <scope>BIOPHYSICOCHEMICAL PROPERTIES</scope>
    <scope>PATHWAY</scope>
    <scope>DISRUPTION PHENOTYPE</scope>
    <scope>MUTAGENESIS OF 214-ASP-GLU-215; HIS-311 AND HIS-318</scope>
    <source>
        <strain>NRRL 3125</strain>
    </source>
</reference>
<reference key="3">
    <citation type="journal article" date="2020" name="J. Am. Chem. Soc.">
        <title>A Peroxodiiron(III/III) Intermediate Mediating Both N-Hydroxylation Steps in Biosynthesis of the N-Nitrosourea Pharmacophore of Streptozotocin by the Multi-domain Metalloenzyme SznF.</title>
        <authorList>
            <person name="McBride M.J."/>
            <person name="Sil D."/>
            <person name="Ng T.L."/>
            <person name="Crooke A.M."/>
            <person name="Kenney G.E."/>
            <person name="Tysoe C.R."/>
            <person name="Zhang B."/>
            <person name="Balskus E.P."/>
            <person name="Boal A.K."/>
            <person name="Krebs C."/>
            <person name="Bollinger J.M. Jr."/>
        </authorList>
    </citation>
    <scope>FUNCTION</scope>
    <scope>CATALYTIC ACTIVITY</scope>
    <scope>REACTION MECHANISM</scope>
    <scope>COFACTOR</scope>
    <scope>DOMAIN</scope>
</reference>
<reference key="4">
    <citation type="journal article" date="2021" name="Inorg. Chem.">
        <title>N-Nitrosation Mechanism Catalyzed by Non-heme Iron-Containing Enzyme SznF Involving Intramolecular Oxidative Rearrangement.</title>
        <authorList>
            <person name="Wang J."/>
            <person name="Wang X."/>
            <person name="Ouyang Q."/>
            <person name="Liu W."/>
            <person name="Shan J."/>
            <person name="Tan H."/>
            <person name="Li X."/>
            <person name="Chen G."/>
        </authorList>
    </citation>
    <scope>FUNCTION</scope>
    <scope>CATALYTIC ACTIVITY</scope>
    <scope>REACTION MECHANISM</scope>
</reference>
<reference evidence="10 11" key="5">
    <citation type="journal article" date="2021" name="Proc. Natl. Acad. Sci. U.S.A.">
        <title>Structure and assembly of the diiron cofactor in the heme-oxygenase-like domain of the N-nitrosourea-producing enzyme SznF.</title>
        <authorList>
            <person name="McBride M.J."/>
            <person name="Pope S.R."/>
            <person name="Hu K."/>
            <person name="Okafor C.D."/>
            <person name="Balskus E.P."/>
            <person name="Bollinger J.M."/>
            <person name="Boal A.K."/>
        </authorList>
    </citation>
    <scope>X-RAY CRYSTALLOGRAPHY (1.66 ANGSTROMS) OF APOENZYME AND IN COMPLEX WITH IRON</scope>
    <scope>COFACTOR</scope>
    <scope>SUBUNIT</scope>
    <scope>DOMAIN</scope>
</reference>
<feature type="chain" id="PRO_0000457552" description="Nitrosourea synthase">
    <location>
        <begin position="1"/>
        <end position="471"/>
    </location>
</feature>
<feature type="region of interest" description="HO-like" evidence="9">
    <location>
        <begin position="177"/>
        <end position="328"/>
    </location>
</feature>
<feature type="region of interest" description="Cupin" evidence="9">
    <location>
        <begin position="397"/>
        <end position="459"/>
    </location>
</feature>
<feature type="binding site" evidence="4 10">
    <location>
        <position position="189"/>
    </location>
    <ligand>
        <name>Fe(2+)</name>
        <dbReference type="ChEBI" id="CHEBI:29033"/>
        <label>1</label>
    </ligand>
</feature>
<feature type="binding site" evidence="4 10">
    <location>
        <position position="215"/>
    </location>
    <ligand>
        <name>Fe(2+)</name>
        <dbReference type="ChEBI" id="CHEBI:29033"/>
        <label>1</label>
    </ligand>
</feature>
<feature type="binding site" evidence="4 10">
    <location>
        <position position="215"/>
    </location>
    <ligand>
        <name>Fe(2+)</name>
        <dbReference type="ChEBI" id="CHEBI:29033"/>
        <label>2</label>
    </ligand>
</feature>
<feature type="binding site" evidence="4 10">
    <location>
        <position position="225"/>
    </location>
    <ligand>
        <name>Fe(2+)</name>
        <dbReference type="ChEBI" id="CHEBI:29033"/>
        <label>1</label>
    </ligand>
</feature>
<feature type="binding site" evidence="4 10">
    <location>
        <position position="281"/>
    </location>
    <ligand>
        <name>Fe(2+)</name>
        <dbReference type="ChEBI" id="CHEBI:29033"/>
        <label>2</label>
    </ligand>
</feature>
<feature type="binding site" evidence="4 10">
    <location>
        <position position="311"/>
    </location>
    <ligand>
        <name>Fe(2+)</name>
        <dbReference type="ChEBI" id="CHEBI:29033"/>
        <label>1</label>
    </ligand>
</feature>
<feature type="binding site" evidence="4 10">
    <location>
        <position position="315"/>
    </location>
    <ligand>
        <name>Fe(2+)</name>
        <dbReference type="ChEBI" id="CHEBI:29033"/>
        <label>2</label>
    </ligand>
</feature>
<feature type="binding site" evidence="4 10">
    <location>
        <position position="318"/>
    </location>
    <ligand>
        <name>Fe(2+)</name>
        <dbReference type="ChEBI" id="CHEBI:29033"/>
        <label>2</label>
    </ligand>
</feature>
<feature type="binding site" evidence="4 10">
    <location>
        <position position="407"/>
    </location>
    <ligand>
        <name>Fe(2+)</name>
        <dbReference type="ChEBI" id="CHEBI:29033"/>
        <label>3</label>
    </ligand>
</feature>
<feature type="binding site" evidence="4 10">
    <location>
        <position position="409"/>
    </location>
    <ligand>
        <name>Fe(2+)</name>
        <dbReference type="ChEBI" id="CHEBI:29033"/>
        <label>3</label>
    </ligand>
</feature>
<feature type="binding site" evidence="4 10">
    <location>
        <position position="448"/>
    </location>
    <ligand>
        <name>Fe(2+)</name>
        <dbReference type="ChEBI" id="CHEBI:29033"/>
        <label>3</label>
    </ligand>
</feature>
<feature type="mutagenesis site" description="Loss of activity." evidence="2">
    <original>DE</original>
    <variation>AA</variation>
    <location>
        <begin position="214"/>
        <end position="215"/>
    </location>
</feature>
<feature type="mutagenesis site" description="Loss of activity." evidence="1">
    <original>E</original>
    <variation>A</variation>
    <location>
        <position position="215"/>
    </location>
</feature>
<feature type="mutagenesis site" description="Loss of activity." evidence="1">
    <original>H</original>
    <variation>A</variation>
    <location>
        <position position="225"/>
    </location>
</feature>
<feature type="mutagenesis site" description="Loss of activity." evidence="1">
    <original>E</original>
    <variation>A</variation>
    <location>
        <position position="281"/>
    </location>
</feature>
<feature type="mutagenesis site" description="Loss of activity." evidence="1 2">
    <original>H</original>
    <variation>A</variation>
    <location>
        <position position="311"/>
    </location>
</feature>
<feature type="mutagenesis site" description="Loss of activity." evidence="1">
    <original>D</original>
    <variation>A</variation>
    <location>
        <position position="315"/>
    </location>
</feature>
<feature type="mutagenesis site" description="Loss of activity." evidence="1 2">
    <original>H</original>
    <variation>A</variation>
    <location>
        <position position="318"/>
    </location>
</feature>
<feature type="mutagenesis site" description="Accumulates the intermediate L-DHMA, but cannot form the final product; when associated with A-409 and A-448." evidence="1">
    <original>H</original>
    <variation>A</variation>
    <location>
        <position position="407"/>
    </location>
</feature>
<feature type="mutagenesis site" description="Accumulates the intermediate L-DHMA, but cannot form the final product; when associated with A-407 and A-448." evidence="1">
    <original>H</original>
    <variation>A</variation>
    <location>
        <position position="409"/>
    </location>
</feature>
<feature type="mutagenesis site" description="Accumulates the intermediate L-DHMA, but cannot form the final product; when associated with A-407 and A-409." evidence="1">
    <original>H</original>
    <variation>A</variation>
    <location>
        <position position="448"/>
    </location>
</feature>
<feature type="helix" evidence="12">
    <location>
        <begin position="14"/>
        <end position="25"/>
    </location>
</feature>
<feature type="helix" evidence="12">
    <location>
        <begin position="28"/>
        <end position="30"/>
    </location>
</feature>
<feature type="strand" evidence="12">
    <location>
        <begin position="34"/>
        <end position="37"/>
    </location>
</feature>
<feature type="helix" evidence="12">
    <location>
        <begin position="49"/>
        <end position="54"/>
    </location>
</feature>
<feature type="helix" evidence="12">
    <location>
        <begin position="63"/>
        <end position="65"/>
    </location>
</feature>
<feature type="helix" evidence="12">
    <location>
        <begin position="69"/>
        <end position="83"/>
    </location>
</feature>
<feature type="strand" evidence="12">
    <location>
        <begin position="86"/>
        <end position="88"/>
    </location>
</feature>
<feature type="helix" evidence="12">
    <location>
        <begin position="98"/>
        <end position="104"/>
    </location>
</feature>
<feature type="helix" evidence="12">
    <location>
        <begin position="107"/>
        <end position="125"/>
    </location>
</feature>
<feature type="helix" evidence="12">
    <location>
        <begin position="128"/>
        <end position="131"/>
    </location>
</feature>
<feature type="helix" evidence="12">
    <location>
        <begin position="140"/>
        <end position="148"/>
    </location>
</feature>
<feature type="helix" evidence="12">
    <location>
        <begin position="160"/>
        <end position="166"/>
    </location>
</feature>
<feature type="strand" evidence="12">
    <location>
        <begin position="168"/>
        <end position="170"/>
    </location>
</feature>
<feature type="helix" evidence="12">
    <location>
        <begin position="171"/>
        <end position="181"/>
    </location>
</feature>
<feature type="helix" evidence="12">
    <location>
        <begin position="183"/>
        <end position="186"/>
    </location>
</feature>
<feature type="turn" evidence="12">
    <location>
        <begin position="187"/>
        <end position="190"/>
    </location>
</feature>
<feature type="helix" evidence="12">
    <location>
        <begin position="191"/>
        <end position="194"/>
    </location>
</feature>
<feature type="helix" evidence="12">
    <location>
        <begin position="195"/>
        <end position="197"/>
    </location>
</feature>
<feature type="strand" evidence="12">
    <location>
        <begin position="198"/>
        <end position="200"/>
    </location>
</feature>
<feature type="helix" evidence="12">
    <location>
        <begin position="203"/>
        <end position="215"/>
    </location>
</feature>
<feature type="helix" evidence="12">
    <location>
        <begin position="217"/>
        <end position="219"/>
    </location>
</feature>
<feature type="helix" evidence="12">
    <location>
        <begin position="221"/>
        <end position="223"/>
    </location>
</feature>
<feature type="helix" evidence="12">
    <location>
        <begin position="225"/>
        <end position="235"/>
    </location>
</feature>
<feature type="turn" evidence="12">
    <location>
        <begin position="242"/>
        <end position="245"/>
    </location>
</feature>
<feature type="helix" evidence="12">
    <location>
        <begin position="246"/>
        <end position="248"/>
    </location>
</feature>
<feature type="helix" evidence="12">
    <location>
        <begin position="251"/>
        <end position="265"/>
    </location>
</feature>
<feature type="helix" evidence="12">
    <location>
        <begin position="267"/>
        <end position="269"/>
    </location>
</feature>
<feature type="helix" evidence="12">
    <location>
        <begin position="270"/>
        <end position="299"/>
    </location>
</feature>
<feature type="helix" evidence="12">
    <location>
        <begin position="300"/>
        <end position="302"/>
    </location>
</feature>
<feature type="helix" evidence="12">
    <location>
        <begin position="306"/>
        <end position="325"/>
    </location>
</feature>
<feature type="helix" evidence="12">
    <location>
        <begin position="327"/>
        <end position="334"/>
    </location>
</feature>
<feature type="helix" evidence="12">
    <location>
        <begin position="336"/>
        <end position="338"/>
    </location>
</feature>
<feature type="helix" evidence="12">
    <location>
        <begin position="339"/>
        <end position="368"/>
    </location>
</feature>
<feature type="helix" evidence="12">
    <location>
        <begin position="370"/>
        <end position="385"/>
    </location>
</feature>
<feature type="strand" evidence="12">
    <location>
        <begin position="393"/>
        <end position="399"/>
    </location>
</feature>
<feature type="strand" evidence="12">
    <location>
        <begin position="403"/>
        <end position="407"/>
    </location>
</feature>
<feature type="strand" evidence="12">
    <location>
        <begin position="410"/>
        <end position="420"/>
    </location>
</feature>
<feature type="strand" evidence="12">
    <location>
        <begin position="422"/>
        <end position="427"/>
    </location>
</feature>
<feature type="strand" evidence="12">
    <location>
        <begin position="430"/>
        <end position="434"/>
    </location>
</feature>
<feature type="strand" evidence="12">
    <location>
        <begin position="439"/>
        <end position="442"/>
    </location>
</feature>
<feature type="strand" evidence="12">
    <location>
        <begin position="448"/>
        <end position="452"/>
    </location>
</feature>
<feature type="strand" evidence="12">
    <location>
        <begin position="454"/>
        <end position="466"/>
    </location>
</feature>
<feature type="helix" evidence="12">
    <location>
        <begin position="467"/>
        <end position="470"/>
    </location>
</feature>
<dbReference type="EC" id="1.14.13.250" evidence="1 2"/>
<dbReference type="EMBL" id="MK291260">
    <property type="protein sequence ID" value="QBA82042.1"/>
    <property type="molecule type" value="Genomic_DNA"/>
</dbReference>
<dbReference type="EMBL" id="MK303572">
    <property type="protein sequence ID" value="QBA82202.1"/>
    <property type="molecule type" value="Genomic_DNA"/>
</dbReference>
<dbReference type="EMBL" id="MK440296">
    <property type="protein sequence ID" value="QBF29330.1"/>
    <property type="molecule type" value="Genomic_DNA"/>
</dbReference>
<dbReference type="PDB" id="6VZY">
    <property type="method" value="X-ray"/>
    <property type="resolution" value="1.66 A"/>
    <property type="chains" value="A/B=1-471"/>
</dbReference>
<dbReference type="PDB" id="6XCV">
    <property type="method" value="X-ray"/>
    <property type="resolution" value="1.77 A"/>
    <property type="chains" value="A/B=1-471"/>
</dbReference>
<dbReference type="PDB" id="8E8W">
    <property type="method" value="X-ray"/>
    <property type="resolution" value="2.50 A"/>
    <property type="chains" value="A/B=1-471"/>
</dbReference>
<dbReference type="PDBsum" id="6VZY"/>
<dbReference type="PDBsum" id="6XCV"/>
<dbReference type="PDBsum" id="8E8W"/>
<dbReference type="SMR" id="A0A411MR89"/>
<dbReference type="KEGG" id="ag:QBA82202"/>
<dbReference type="KEGG" id="ag:QBF29330"/>
<dbReference type="BioCyc" id="MetaCyc:MONOMER-21763"/>
<dbReference type="GO" id="GO:0046872">
    <property type="term" value="F:metal ion binding"/>
    <property type="evidence" value="ECO:0007669"/>
    <property type="project" value="UniProtKB-KW"/>
</dbReference>
<dbReference type="GO" id="GO:0004497">
    <property type="term" value="F:monooxygenase activity"/>
    <property type="evidence" value="ECO:0007669"/>
    <property type="project" value="UniProtKB-KW"/>
</dbReference>
<dbReference type="GO" id="GO:0017000">
    <property type="term" value="P:antibiotic biosynthetic process"/>
    <property type="evidence" value="ECO:0007669"/>
    <property type="project" value="UniProtKB-KW"/>
</dbReference>
<dbReference type="CDD" id="cd07002">
    <property type="entry name" value="cupin_SznF-like_C"/>
    <property type="match status" value="1"/>
</dbReference>
<dbReference type="Gene3D" id="1.20.910.10">
    <property type="entry name" value="Heme oxygenase-like"/>
    <property type="match status" value="1"/>
</dbReference>
<dbReference type="Gene3D" id="2.60.120.10">
    <property type="entry name" value="Jelly Rolls"/>
    <property type="match status" value="1"/>
</dbReference>
<dbReference type="InterPro" id="IPR013096">
    <property type="entry name" value="Cupin_2"/>
</dbReference>
<dbReference type="InterPro" id="IPR016084">
    <property type="entry name" value="Haem_Oase-like_multi-hlx"/>
</dbReference>
<dbReference type="InterPro" id="IPR014710">
    <property type="entry name" value="RmlC-like_jellyroll"/>
</dbReference>
<dbReference type="InterPro" id="IPR011051">
    <property type="entry name" value="RmlC_Cupin_sf"/>
</dbReference>
<dbReference type="Pfam" id="PF07883">
    <property type="entry name" value="Cupin_2"/>
    <property type="match status" value="1"/>
</dbReference>
<dbReference type="Pfam" id="PF14518">
    <property type="entry name" value="Haem_oxygenas_2"/>
    <property type="match status" value="1"/>
</dbReference>
<dbReference type="SMART" id="SM01236">
    <property type="entry name" value="Haem_oxygenase_2"/>
    <property type="match status" value="1"/>
</dbReference>
<dbReference type="SUPFAM" id="SSF48613">
    <property type="entry name" value="Heme oxygenase-like"/>
    <property type="match status" value="1"/>
</dbReference>
<dbReference type="SUPFAM" id="SSF51182">
    <property type="entry name" value="RmlC-like cupins"/>
    <property type="match status" value="1"/>
</dbReference>
<evidence type="ECO:0000269" key="1">
    <source>
    </source>
</evidence>
<evidence type="ECO:0000269" key="2">
    <source>
    </source>
</evidence>
<evidence type="ECO:0000269" key="3">
    <source>
    </source>
</evidence>
<evidence type="ECO:0000269" key="4">
    <source>
    </source>
</evidence>
<evidence type="ECO:0000269" key="5">
    <source>
    </source>
</evidence>
<evidence type="ECO:0000303" key="6">
    <source>
    </source>
</evidence>
<evidence type="ECO:0000303" key="7">
    <source>
    </source>
</evidence>
<evidence type="ECO:0000303" key="8">
    <source>
    </source>
</evidence>
<evidence type="ECO:0000305" key="9"/>
<evidence type="ECO:0007744" key="10">
    <source>
        <dbReference type="PDB" id="6VZY"/>
    </source>
</evidence>
<evidence type="ECO:0007744" key="11">
    <source>
        <dbReference type="PDB" id="6XCV"/>
    </source>
</evidence>
<evidence type="ECO:0007829" key="12">
    <source>
        <dbReference type="PDB" id="6VZY"/>
    </source>
</evidence>
<comment type="function">
    <text evidence="1 2 3 5">Involved in the biosynthesis of the glucosamine-nitrosourea antibiotic streptozotocin (SZN) (PubMed:30728519, PubMed:30763082). Catalyzes a complex multi-step reaction: the overall reaction is an oxidative rearrangement of the guanidine group of N(omega)-methyl-L-arginine (L-NMA), generating an N-nitrosourea product (PubMed:30728519, PubMed:30763082, PubMed:32511919). SznF first hydroxylates L-NMA to form N(delta)-hydroxy-N(omega)-methyl-L-arginine (L-HMA), which is further hydroxylated to give N(delta)-hydroxy-N(omega)-hydroxy-N(omega)-methyl-L-arginine (L-DHMA) (PubMed:30728519, PubMed:32511919). Subsequently, an oxidative rearrangement converts this intermediate to N(delta)-hydroxy-N(omega)-methyl-N(omega)-nitroso-L-citrulline (PubMed:30728519, PubMed:34004115). This product is unstable, and degrades non-enzymically into nitric oxide and the denitrosated product N(delta)-hydroxy-N(omega)-methyl-L-citrulline (PubMed:30728519).</text>
</comment>
<comment type="catalytic activity">
    <reaction evidence="1 2 3">
        <text>N(omega)-methyl-L-arginine + 2 NADH + 3 O2 + H(+) = N(delta)-hydroxy-N(omega)-methyl-N(omega)-nitroso-L-citrulline + 2 NAD(+) + 3 H2O</text>
        <dbReference type="Rhea" id="RHEA:69052"/>
        <dbReference type="ChEBI" id="CHEBI:15377"/>
        <dbReference type="ChEBI" id="CHEBI:15378"/>
        <dbReference type="ChEBI" id="CHEBI:15379"/>
        <dbReference type="ChEBI" id="CHEBI:57540"/>
        <dbReference type="ChEBI" id="CHEBI:57945"/>
        <dbReference type="ChEBI" id="CHEBI:114953"/>
        <dbReference type="ChEBI" id="CHEBI:143209"/>
        <dbReference type="EC" id="1.14.13.250"/>
    </reaction>
    <physiologicalReaction direction="left-to-right" evidence="1 2 3">
        <dbReference type="Rhea" id="RHEA:69053"/>
    </physiologicalReaction>
</comment>
<comment type="catalytic activity">
    <reaction evidence="1 2 3">
        <text>N(omega)-methyl-L-arginine + NADH + O2 + H(+) = N(delta)-hydroxy-N(omega)-methyl-L-arginine + NAD(+) + H2O</text>
        <dbReference type="Rhea" id="RHEA:69056"/>
        <dbReference type="ChEBI" id="CHEBI:15377"/>
        <dbReference type="ChEBI" id="CHEBI:15378"/>
        <dbReference type="ChEBI" id="CHEBI:15379"/>
        <dbReference type="ChEBI" id="CHEBI:57540"/>
        <dbReference type="ChEBI" id="CHEBI:57945"/>
        <dbReference type="ChEBI" id="CHEBI:114953"/>
        <dbReference type="ChEBI" id="CHEBI:143207"/>
    </reaction>
    <physiologicalReaction direction="left-to-right" evidence="1 2 3">
        <dbReference type="Rhea" id="RHEA:69057"/>
    </physiologicalReaction>
</comment>
<comment type="catalytic activity">
    <reaction evidence="1 3">
        <text>N(delta)-hydroxy-N(omega)-methyl-L-arginine + NADH + O2 = N(delta),N(omega')-dihydroxy-N(omega)-methyl-L-arginine + NAD(+) + H2O</text>
        <dbReference type="Rhea" id="RHEA:69060"/>
        <dbReference type="ChEBI" id="CHEBI:15377"/>
        <dbReference type="ChEBI" id="CHEBI:15379"/>
        <dbReference type="ChEBI" id="CHEBI:57540"/>
        <dbReference type="ChEBI" id="CHEBI:57945"/>
        <dbReference type="ChEBI" id="CHEBI:143207"/>
        <dbReference type="ChEBI" id="CHEBI:143208"/>
    </reaction>
    <physiologicalReaction direction="left-to-right" evidence="1 3">
        <dbReference type="Rhea" id="RHEA:69061"/>
    </physiologicalReaction>
</comment>
<comment type="catalytic activity">
    <reaction evidence="1 5">
        <text>N(delta),N(omega')-dihydroxy-N(omega)-methyl-L-arginine + O2 = N(delta)-hydroxy-N(omega)-methyl-N(omega)-nitroso-L-citrulline + H2O</text>
        <dbReference type="Rhea" id="RHEA:69064"/>
        <dbReference type="ChEBI" id="CHEBI:15377"/>
        <dbReference type="ChEBI" id="CHEBI:15379"/>
        <dbReference type="ChEBI" id="CHEBI:143208"/>
        <dbReference type="ChEBI" id="CHEBI:143209"/>
    </reaction>
    <physiologicalReaction direction="left-to-right" evidence="1 5">
        <dbReference type="Rhea" id="RHEA:69065"/>
    </physiologicalReaction>
</comment>
<comment type="catalytic activity">
    <reaction evidence="1">
        <text>2 N(delta)-hydroxy-N(omega)-methyl-N(omega)-nitroso-L-citrulline + AH2 = 2 N(delta)-hydroxy-N(omega)-methyl-L-citrulline + 2 nitric oxide + A</text>
        <dbReference type="Rhea" id="RHEA:69068"/>
        <dbReference type="ChEBI" id="CHEBI:13193"/>
        <dbReference type="ChEBI" id="CHEBI:16480"/>
        <dbReference type="ChEBI" id="CHEBI:17499"/>
        <dbReference type="ChEBI" id="CHEBI:143209"/>
        <dbReference type="ChEBI" id="CHEBI:143210"/>
    </reaction>
    <physiologicalReaction direction="left-to-right" evidence="1">
        <dbReference type="Rhea" id="RHEA:69069"/>
    </physiologicalReaction>
</comment>
<comment type="cofactor">
    <cofactor evidence="1 2 3 4">
        <name>Fe(2+)</name>
        <dbReference type="ChEBI" id="CHEBI:29033"/>
    </cofactor>
    <text evidence="4">Binds 3 Fe(2+) ions per subunit (PubMed:33468680). Two Fe(2+) bind the HO-like central domain and one Fe(2+) binds the C-terminal cupin domain (PubMed:33468680).</text>
</comment>
<comment type="biophysicochemical properties">
    <phDependence>
        <text evidence="2">Stable and active at pH 3-8, but loses its activity above pH 9 (PubMed:30763082). Shows reduced activity in phosphate buffer at pH 4-6 (PubMed:30763082).</text>
    </phDependence>
</comment>
<comment type="pathway">
    <text evidence="1 2">Antibiotic biosynthesis.</text>
</comment>
<comment type="subunit">
    <text evidence="1 4">Homodimer.</text>
</comment>
<comment type="domain">
    <text evidence="1 3 4">Contains three distinc domains: N-terminal helical motifs involved in dimerization, followed by a heme-oxygenase-like (HO-like) central domain and a C-terminal monoiron cupin domain (PubMed:30728519, PubMed:33468680). The central domain catalyzes the two sequential N-hydroxylations of L-NMA and the cupin domain enables oxidative rearrangement and N-N bond formation to yield the N-nitrosourea product (PubMed:30728519). The central HO-like domain can bind Fe(2+) and use it to capture O(2), forming a peroxo-Fe2(III/III) intermediate, which is an intermediate in both hydroxylation steps (PubMed:32511919). Structural changes accompany diiron cofactor assembly in the HO-like domain (PubMed:33468680).</text>
</comment>
<comment type="disruption phenotype">
    <text evidence="1 2">Deletion of the gene abolishes SZN production (PubMed:30728519, PubMed:30763082). Mutant accumulates L-NMA (PubMed:30728519).</text>
</comment>